<gene>
    <name type="primary">fliZ</name>
</gene>
<feature type="chain" id="PRO_0000087291" description="Protein FliZ">
    <location>
        <begin position="1"/>
        <end position="66" status="greater than"/>
    </location>
</feature>
<feature type="non-terminal residue">
    <location>
        <position position="66"/>
    </location>
</feature>
<dbReference type="EMBL" id="U17393">
    <property type="protein sequence ID" value="AAC43395.1"/>
    <property type="molecule type" value="Genomic_DNA"/>
</dbReference>
<dbReference type="SMR" id="P52629"/>
<dbReference type="STRING" id="1443113.LC20_02198"/>
<dbReference type="eggNOG" id="ENOG502Z9YQ">
    <property type="taxonomic scope" value="Bacteria"/>
</dbReference>
<proteinExistence type="predicted"/>
<accession>P52629</accession>
<sequence>MPGLQLKKRPLSRYLKDYKHGQTHCSHCHKQLDRMALVFRGQIINKEAIAGMDQPIDDQVWSKLQH</sequence>
<protein>
    <recommendedName>
        <fullName>Protein FliZ</fullName>
    </recommendedName>
</protein>
<organism>
    <name type="scientific">Yersinia enterocolitica</name>
    <dbReference type="NCBI Taxonomy" id="630"/>
    <lineage>
        <taxon>Bacteria</taxon>
        <taxon>Pseudomonadati</taxon>
        <taxon>Pseudomonadota</taxon>
        <taxon>Gammaproteobacteria</taxon>
        <taxon>Enterobacterales</taxon>
        <taxon>Yersiniaceae</taxon>
        <taxon>Yersinia</taxon>
    </lineage>
</organism>
<reference key="1">
    <citation type="journal article" date="1995" name="J. Bacteriol.">
        <title>The fliA gene encoding sigma 28 in Yersinia enterocolitica.</title>
        <authorList>
            <person name="Iriarte M."/>
            <person name="Stainier I."/>
            <person name="Mikulskis A."/>
            <person name="Cornelis G.R."/>
        </authorList>
    </citation>
    <scope>NUCLEOTIDE SEQUENCE [GENOMIC DNA]</scope>
    <source>
        <strain>W1024 / Serotype O:9</strain>
    </source>
</reference>
<name>FLIZ_YEREN</name>
<comment type="function">
    <text>May regulate sigma factor activity.</text>
</comment>